<evidence type="ECO:0000250" key="1"/>
<evidence type="ECO:0000305" key="2"/>
<feature type="chain" id="PRO_0000145974" description="Phosphoglycerate kinase">
    <location>
        <begin position="1"/>
        <end position="412"/>
    </location>
</feature>
<feature type="binding site" evidence="1">
    <location>
        <begin position="24"/>
        <end position="26"/>
    </location>
    <ligand>
        <name>substrate</name>
    </ligand>
</feature>
<feature type="binding site" evidence="1">
    <location>
        <position position="40"/>
    </location>
    <ligand>
        <name>substrate</name>
    </ligand>
</feature>
<feature type="binding site" evidence="1">
    <location>
        <begin position="63"/>
        <end position="66"/>
    </location>
    <ligand>
        <name>substrate</name>
    </ligand>
</feature>
<feature type="binding site" evidence="1">
    <location>
        <position position="122"/>
    </location>
    <ligand>
        <name>substrate</name>
    </ligand>
</feature>
<feature type="binding site" evidence="1">
    <location>
        <position position="162"/>
    </location>
    <ligand>
        <name>substrate</name>
    </ligand>
</feature>
<feature type="binding site" evidence="1">
    <location>
        <position position="212"/>
    </location>
    <ligand>
        <name>ATP</name>
        <dbReference type="ChEBI" id="CHEBI:30616"/>
    </ligand>
</feature>
<feature type="binding site" evidence="1">
    <location>
        <position position="300"/>
    </location>
    <ligand>
        <name>ATP</name>
        <dbReference type="ChEBI" id="CHEBI:30616"/>
    </ligand>
</feature>
<feature type="binding site" evidence="1">
    <location>
        <position position="331"/>
    </location>
    <ligand>
        <name>ATP</name>
        <dbReference type="ChEBI" id="CHEBI:30616"/>
    </ligand>
</feature>
<feature type="binding site" evidence="1">
    <location>
        <begin position="360"/>
        <end position="363"/>
    </location>
    <ligand>
        <name>ATP</name>
        <dbReference type="ChEBI" id="CHEBI:30616"/>
    </ligand>
</feature>
<accession>P65701</accession>
<accession>A0A1R3XYC6</accession>
<accession>O06821</accession>
<accession>X2BIC0</accession>
<reference key="1">
    <citation type="journal article" date="2003" name="Proc. Natl. Acad. Sci. U.S.A.">
        <title>The complete genome sequence of Mycobacterium bovis.</title>
        <authorList>
            <person name="Garnier T."/>
            <person name="Eiglmeier K."/>
            <person name="Camus J.-C."/>
            <person name="Medina N."/>
            <person name="Mansoor H."/>
            <person name="Pryor M."/>
            <person name="Duthoy S."/>
            <person name="Grondin S."/>
            <person name="Lacroix C."/>
            <person name="Monsempe C."/>
            <person name="Simon S."/>
            <person name="Harris B."/>
            <person name="Atkin R."/>
            <person name="Doggett J."/>
            <person name="Mayes R."/>
            <person name="Keating L."/>
            <person name="Wheeler P.R."/>
            <person name="Parkhill J."/>
            <person name="Barrell B.G."/>
            <person name="Cole S.T."/>
            <person name="Gordon S.V."/>
            <person name="Hewinson R.G."/>
        </authorList>
    </citation>
    <scope>NUCLEOTIDE SEQUENCE [LARGE SCALE GENOMIC DNA]</scope>
    <source>
        <strain>ATCC BAA-935 / AF2122/97</strain>
    </source>
</reference>
<reference key="2">
    <citation type="journal article" date="2017" name="Genome Announc.">
        <title>Updated reference genome sequence and annotation of Mycobacterium bovis AF2122/97.</title>
        <authorList>
            <person name="Malone K.M."/>
            <person name="Farrell D."/>
            <person name="Stuber T.P."/>
            <person name="Schubert O.T."/>
            <person name="Aebersold R."/>
            <person name="Robbe-Austerman S."/>
            <person name="Gordon S.V."/>
        </authorList>
    </citation>
    <scope>NUCLEOTIDE SEQUENCE [LARGE SCALE GENOMIC DNA]</scope>
    <scope>GENOME REANNOTATION</scope>
    <source>
        <strain>ATCC BAA-935 / AF2122/97</strain>
    </source>
</reference>
<gene>
    <name type="primary">pgk</name>
    <name type="ordered locus">BQ2027_MB1472</name>
</gene>
<dbReference type="EC" id="2.7.2.3"/>
<dbReference type="EMBL" id="LT708304">
    <property type="protein sequence ID" value="SIU00075.1"/>
    <property type="molecule type" value="Genomic_DNA"/>
</dbReference>
<dbReference type="RefSeq" id="NP_855124.1">
    <property type="nucleotide sequence ID" value="NC_002945.3"/>
</dbReference>
<dbReference type="RefSeq" id="WP_003900339.1">
    <property type="nucleotide sequence ID" value="NC_002945.4"/>
</dbReference>
<dbReference type="SMR" id="P65701"/>
<dbReference type="KEGG" id="mbo:BQ2027_MB1472"/>
<dbReference type="PATRIC" id="fig|233413.5.peg.1606"/>
<dbReference type="UniPathway" id="UPA00109">
    <property type="reaction ID" value="UER00185"/>
</dbReference>
<dbReference type="Proteomes" id="UP000001419">
    <property type="component" value="Chromosome"/>
</dbReference>
<dbReference type="GO" id="GO:0005829">
    <property type="term" value="C:cytosol"/>
    <property type="evidence" value="ECO:0007669"/>
    <property type="project" value="TreeGrafter"/>
</dbReference>
<dbReference type="GO" id="GO:0043531">
    <property type="term" value="F:ADP binding"/>
    <property type="evidence" value="ECO:0007669"/>
    <property type="project" value="TreeGrafter"/>
</dbReference>
<dbReference type="GO" id="GO:0005524">
    <property type="term" value="F:ATP binding"/>
    <property type="evidence" value="ECO:0007669"/>
    <property type="project" value="UniProtKB-KW"/>
</dbReference>
<dbReference type="GO" id="GO:0004618">
    <property type="term" value="F:phosphoglycerate kinase activity"/>
    <property type="evidence" value="ECO:0007669"/>
    <property type="project" value="UniProtKB-UniRule"/>
</dbReference>
<dbReference type="GO" id="GO:0006094">
    <property type="term" value="P:gluconeogenesis"/>
    <property type="evidence" value="ECO:0007669"/>
    <property type="project" value="TreeGrafter"/>
</dbReference>
<dbReference type="GO" id="GO:0006096">
    <property type="term" value="P:glycolytic process"/>
    <property type="evidence" value="ECO:0007669"/>
    <property type="project" value="UniProtKB-UniRule"/>
</dbReference>
<dbReference type="CDD" id="cd00318">
    <property type="entry name" value="Phosphoglycerate_kinase"/>
    <property type="match status" value="1"/>
</dbReference>
<dbReference type="FunFam" id="3.40.50.1260:FF:000006">
    <property type="entry name" value="Phosphoglycerate kinase"/>
    <property type="match status" value="1"/>
</dbReference>
<dbReference type="FunFam" id="3.40.50.1260:FF:000031">
    <property type="entry name" value="Phosphoglycerate kinase 1"/>
    <property type="match status" value="1"/>
</dbReference>
<dbReference type="Gene3D" id="3.40.50.1260">
    <property type="entry name" value="Phosphoglycerate kinase, N-terminal domain"/>
    <property type="match status" value="2"/>
</dbReference>
<dbReference type="HAMAP" id="MF_00145">
    <property type="entry name" value="Phosphoglyc_kinase"/>
    <property type="match status" value="1"/>
</dbReference>
<dbReference type="InterPro" id="IPR001576">
    <property type="entry name" value="Phosphoglycerate_kinase"/>
</dbReference>
<dbReference type="InterPro" id="IPR015911">
    <property type="entry name" value="Phosphoglycerate_kinase_CS"/>
</dbReference>
<dbReference type="InterPro" id="IPR015824">
    <property type="entry name" value="Phosphoglycerate_kinase_N"/>
</dbReference>
<dbReference type="InterPro" id="IPR036043">
    <property type="entry name" value="Phosphoglycerate_kinase_sf"/>
</dbReference>
<dbReference type="PANTHER" id="PTHR11406">
    <property type="entry name" value="PHOSPHOGLYCERATE KINASE"/>
    <property type="match status" value="1"/>
</dbReference>
<dbReference type="PANTHER" id="PTHR11406:SF23">
    <property type="entry name" value="PHOSPHOGLYCERATE KINASE 1, CHLOROPLASTIC-RELATED"/>
    <property type="match status" value="1"/>
</dbReference>
<dbReference type="Pfam" id="PF00162">
    <property type="entry name" value="PGK"/>
    <property type="match status" value="1"/>
</dbReference>
<dbReference type="PIRSF" id="PIRSF000724">
    <property type="entry name" value="Pgk"/>
    <property type="match status" value="1"/>
</dbReference>
<dbReference type="PRINTS" id="PR00477">
    <property type="entry name" value="PHGLYCKINASE"/>
</dbReference>
<dbReference type="SUPFAM" id="SSF53748">
    <property type="entry name" value="Phosphoglycerate kinase"/>
    <property type="match status" value="1"/>
</dbReference>
<dbReference type="PROSITE" id="PS00111">
    <property type="entry name" value="PGLYCERATE_KINASE"/>
    <property type="match status" value="1"/>
</dbReference>
<sequence length="412" mass="42512">MSVANLKDLLAEGVSGRGVLVRSDLNVPLDEDGTITDAGRIIASAPTLKALLDADAKVVVAAHLGRPKDGPDPTLSLAPVAVALGEQLGRHVQLAGDVVGADALARAEGLTGGDILLLENIRFDKRETSKNDDDRRALAKQLVELVGTGGVFVSDGFGVVHRKQASVYDIATLLPHYAGTLVADEMRVLEQLTSSTQRPYAVVLGGSKVSDKLGVIESLATKADSIVIGGGMCFTFLAAQGFSVGTSLLEDDMIEVCRGLLETYHDVLRLPVDLVVTEKFAADSPPQTVDVGAVPNGLMGLDIGPGSIKRFSTLLSNAGTIFWNGPMGVFEFPAYAAGTRGVAEAIVAATGKGAFSVVGGGDSAAAVRAMNIPEGAFSHISTGGGASLEYLEGKTLPGIEVLSREQPTGGVL</sequence>
<name>PGK_MYCBO</name>
<keyword id="KW-0067">ATP-binding</keyword>
<keyword id="KW-0963">Cytoplasm</keyword>
<keyword id="KW-0324">Glycolysis</keyword>
<keyword id="KW-0418">Kinase</keyword>
<keyword id="KW-0547">Nucleotide-binding</keyword>
<keyword id="KW-1185">Reference proteome</keyword>
<keyword id="KW-0808">Transferase</keyword>
<proteinExistence type="inferred from homology"/>
<comment type="catalytic activity">
    <reaction>
        <text>(2R)-3-phosphoglycerate + ATP = (2R)-3-phospho-glyceroyl phosphate + ADP</text>
        <dbReference type="Rhea" id="RHEA:14801"/>
        <dbReference type="ChEBI" id="CHEBI:30616"/>
        <dbReference type="ChEBI" id="CHEBI:57604"/>
        <dbReference type="ChEBI" id="CHEBI:58272"/>
        <dbReference type="ChEBI" id="CHEBI:456216"/>
        <dbReference type="EC" id="2.7.2.3"/>
    </reaction>
</comment>
<comment type="pathway">
    <text>Carbohydrate degradation; glycolysis; pyruvate from D-glyceraldehyde 3-phosphate: step 2/5.</text>
</comment>
<comment type="subunit">
    <text evidence="1">Monomer.</text>
</comment>
<comment type="subcellular location">
    <subcellularLocation>
        <location evidence="2">Cytoplasm</location>
    </subcellularLocation>
</comment>
<comment type="similarity">
    <text evidence="2">Belongs to the phosphoglycerate kinase family.</text>
</comment>
<organism>
    <name type="scientific">Mycobacterium bovis (strain ATCC BAA-935 / AF2122/97)</name>
    <dbReference type="NCBI Taxonomy" id="233413"/>
    <lineage>
        <taxon>Bacteria</taxon>
        <taxon>Bacillati</taxon>
        <taxon>Actinomycetota</taxon>
        <taxon>Actinomycetes</taxon>
        <taxon>Mycobacteriales</taxon>
        <taxon>Mycobacteriaceae</taxon>
        <taxon>Mycobacterium</taxon>
        <taxon>Mycobacterium tuberculosis complex</taxon>
    </lineage>
</organism>
<protein>
    <recommendedName>
        <fullName>Phosphoglycerate kinase</fullName>
        <ecNumber>2.7.2.3</ecNumber>
    </recommendedName>
</protein>